<name>RL11_LEVBA</name>
<feature type="chain" id="PRO_1000046196" description="Large ribosomal subunit protein uL11">
    <location>
        <begin position="1"/>
        <end position="141"/>
    </location>
</feature>
<sequence length="141" mass="14798">MAKKVANVVKLQIPAGKATPAPPVGPALGQAGINIMGFTKEFNARTADQAGMIIPVVISVYEDRSFDFITKTPPAATLLKKAAGVEHGSGEPNTNKVATVTKDQVKQIAETKMQDLNAADVEAAMRMIEGTARSMGFTVEG</sequence>
<dbReference type="EMBL" id="CP000416">
    <property type="protein sequence ID" value="ABJ63733.1"/>
    <property type="molecule type" value="Genomic_DNA"/>
</dbReference>
<dbReference type="RefSeq" id="WP_011667358.1">
    <property type="nucleotide sequence ID" value="NC_008497.1"/>
</dbReference>
<dbReference type="SMR" id="Q03ST9"/>
<dbReference type="STRING" id="387344.LVIS_0588"/>
<dbReference type="GeneID" id="84783476"/>
<dbReference type="KEGG" id="lbr:LVIS_0588"/>
<dbReference type="eggNOG" id="COG0080">
    <property type="taxonomic scope" value="Bacteria"/>
</dbReference>
<dbReference type="HOGENOM" id="CLU_074237_2_1_9"/>
<dbReference type="Proteomes" id="UP000001652">
    <property type="component" value="Chromosome"/>
</dbReference>
<dbReference type="GO" id="GO:0022625">
    <property type="term" value="C:cytosolic large ribosomal subunit"/>
    <property type="evidence" value="ECO:0007669"/>
    <property type="project" value="TreeGrafter"/>
</dbReference>
<dbReference type="GO" id="GO:0070180">
    <property type="term" value="F:large ribosomal subunit rRNA binding"/>
    <property type="evidence" value="ECO:0007669"/>
    <property type="project" value="UniProtKB-UniRule"/>
</dbReference>
<dbReference type="GO" id="GO:0003735">
    <property type="term" value="F:structural constituent of ribosome"/>
    <property type="evidence" value="ECO:0007669"/>
    <property type="project" value="InterPro"/>
</dbReference>
<dbReference type="GO" id="GO:0006412">
    <property type="term" value="P:translation"/>
    <property type="evidence" value="ECO:0007669"/>
    <property type="project" value="UniProtKB-UniRule"/>
</dbReference>
<dbReference type="CDD" id="cd00349">
    <property type="entry name" value="Ribosomal_L11"/>
    <property type="match status" value="1"/>
</dbReference>
<dbReference type="FunFam" id="1.10.10.250:FF:000001">
    <property type="entry name" value="50S ribosomal protein L11"/>
    <property type="match status" value="1"/>
</dbReference>
<dbReference type="FunFam" id="3.30.1550.10:FF:000001">
    <property type="entry name" value="50S ribosomal protein L11"/>
    <property type="match status" value="1"/>
</dbReference>
<dbReference type="Gene3D" id="1.10.10.250">
    <property type="entry name" value="Ribosomal protein L11, C-terminal domain"/>
    <property type="match status" value="1"/>
</dbReference>
<dbReference type="Gene3D" id="3.30.1550.10">
    <property type="entry name" value="Ribosomal protein L11/L12, N-terminal domain"/>
    <property type="match status" value="1"/>
</dbReference>
<dbReference type="HAMAP" id="MF_00736">
    <property type="entry name" value="Ribosomal_uL11"/>
    <property type="match status" value="1"/>
</dbReference>
<dbReference type="InterPro" id="IPR000911">
    <property type="entry name" value="Ribosomal_uL11"/>
</dbReference>
<dbReference type="InterPro" id="IPR006519">
    <property type="entry name" value="Ribosomal_uL11_bac-typ"/>
</dbReference>
<dbReference type="InterPro" id="IPR020783">
    <property type="entry name" value="Ribosomal_uL11_C"/>
</dbReference>
<dbReference type="InterPro" id="IPR036769">
    <property type="entry name" value="Ribosomal_uL11_C_sf"/>
</dbReference>
<dbReference type="InterPro" id="IPR020785">
    <property type="entry name" value="Ribosomal_uL11_CS"/>
</dbReference>
<dbReference type="InterPro" id="IPR020784">
    <property type="entry name" value="Ribosomal_uL11_N"/>
</dbReference>
<dbReference type="InterPro" id="IPR036796">
    <property type="entry name" value="Ribosomal_uL11_N_sf"/>
</dbReference>
<dbReference type="NCBIfam" id="TIGR01632">
    <property type="entry name" value="L11_bact"/>
    <property type="match status" value="1"/>
</dbReference>
<dbReference type="PANTHER" id="PTHR11661">
    <property type="entry name" value="60S RIBOSOMAL PROTEIN L12"/>
    <property type="match status" value="1"/>
</dbReference>
<dbReference type="PANTHER" id="PTHR11661:SF1">
    <property type="entry name" value="LARGE RIBOSOMAL SUBUNIT PROTEIN UL11M"/>
    <property type="match status" value="1"/>
</dbReference>
<dbReference type="Pfam" id="PF00298">
    <property type="entry name" value="Ribosomal_L11"/>
    <property type="match status" value="1"/>
</dbReference>
<dbReference type="Pfam" id="PF03946">
    <property type="entry name" value="Ribosomal_L11_N"/>
    <property type="match status" value="1"/>
</dbReference>
<dbReference type="SMART" id="SM00649">
    <property type="entry name" value="RL11"/>
    <property type="match status" value="1"/>
</dbReference>
<dbReference type="SUPFAM" id="SSF54747">
    <property type="entry name" value="Ribosomal L11/L12e N-terminal domain"/>
    <property type="match status" value="1"/>
</dbReference>
<dbReference type="SUPFAM" id="SSF46906">
    <property type="entry name" value="Ribosomal protein L11, C-terminal domain"/>
    <property type="match status" value="1"/>
</dbReference>
<dbReference type="PROSITE" id="PS00359">
    <property type="entry name" value="RIBOSOMAL_L11"/>
    <property type="match status" value="1"/>
</dbReference>
<evidence type="ECO:0000255" key="1">
    <source>
        <dbReference type="HAMAP-Rule" id="MF_00736"/>
    </source>
</evidence>
<evidence type="ECO:0000305" key="2"/>
<accession>Q03ST9</accession>
<protein>
    <recommendedName>
        <fullName evidence="1">Large ribosomal subunit protein uL11</fullName>
    </recommendedName>
    <alternativeName>
        <fullName evidence="2">50S ribosomal protein L11</fullName>
    </alternativeName>
</protein>
<keyword id="KW-0488">Methylation</keyword>
<keyword id="KW-1185">Reference proteome</keyword>
<keyword id="KW-0687">Ribonucleoprotein</keyword>
<keyword id="KW-0689">Ribosomal protein</keyword>
<keyword id="KW-0694">RNA-binding</keyword>
<keyword id="KW-0699">rRNA-binding</keyword>
<proteinExistence type="inferred from homology"/>
<gene>
    <name evidence="1" type="primary">rplK</name>
    <name type="ordered locus">LVIS_0588</name>
</gene>
<comment type="function">
    <text evidence="1">Forms part of the ribosomal stalk which helps the ribosome interact with GTP-bound translation factors.</text>
</comment>
<comment type="subunit">
    <text evidence="1">Part of the ribosomal stalk of the 50S ribosomal subunit. Interacts with L10 and the large rRNA to form the base of the stalk. L10 forms an elongated spine to which L12 dimers bind in a sequential fashion forming a multimeric L10(L12)X complex.</text>
</comment>
<comment type="PTM">
    <text evidence="1">One or more lysine residues are methylated.</text>
</comment>
<comment type="similarity">
    <text evidence="1">Belongs to the universal ribosomal protein uL11 family.</text>
</comment>
<organism>
    <name type="scientific">Levilactobacillus brevis (strain ATCC 367 / BCRC 12310 / CIP 105137 / JCM 1170 / LMG 11437 / NCIMB 947 / NCTC 947)</name>
    <name type="common">Lactobacillus brevis</name>
    <dbReference type="NCBI Taxonomy" id="387344"/>
    <lineage>
        <taxon>Bacteria</taxon>
        <taxon>Bacillati</taxon>
        <taxon>Bacillota</taxon>
        <taxon>Bacilli</taxon>
        <taxon>Lactobacillales</taxon>
        <taxon>Lactobacillaceae</taxon>
        <taxon>Levilactobacillus</taxon>
    </lineage>
</organism>
<reference key="1">
    <citation type="journal article" date="2006" name="Proc. Natl. Acad. Sci. U.S.A.">
        <title>Comparative genomics of the lactic acid bacteria.</title>
        <authorList>
            <person name="Makarova K.S."/>
            <person name="Slesarev A."/>
            <person name="Wolf Y.I."/>
            <person name="Sorokin A."/>
            <person name="Mirkin B."/>
            <person name="Koonin E.V."/>
            <person name="Pavlov A."/>
            <person name="Pavlova N."/>
            <person name="Karamychev V."/>
            <person name="Polouchine N."/>
            <person name="Shakhova V."/>
            <person name="Grigoriev I."/>
            <person name="Lou Y."/>
            <person name="Rohksar D."/>
            <person name="Lucas S."/>
            <person name="Huang K."/>
            <person name="Goodstein D.M."/>
            <person name="Hawkins T."/>
            <person name="Plengvidhya V."/>
            <person name="Welker D."/>
            <person name="Hughes J."/>
            <person name="Goh Y."/>
            <person name="Benson A."/>
            <person name="Baldwin K."/>
            <person name="Lee J.-H."/>
            <person name="Diaz-Muniz I."/>
            <person name="Dosti B."/>
            <person name="Smeianov V."/>
            <person name="Wechter W."/>
            <person name="Barabote R."/>
            <person name="Lorca G."/>
            <person name="Altermann E."/>
            <person name="Barrangou R."/>
            <person name="Ganesan B."/>
            <person name="Xie Y."/>
            <person name="Rawsthorne H."/>
            <person name="Tamir D."/>
            <person name="Parker C."/>
            <person name="Breidt F."/>
            <person name="Broadbent J.R."/>
            <person name="Hutkins R."/>
            <person name="O'Sullivan D."/>
            <person name="Steele J."/>
            <person name="Unlu G."/>
            <person name="Saier M.H. Jr."/>
            <person name="Klaenhammer T."/>
            <person name="Richardson P."/>
            <person name="Kozyavkin S."/>
            <person name="Weimer B.C."/>
            <person name="Mills D.A."/>
        </authorList>
    </citation>
    <scope>NUCLEOTIDE SEQUENCE [LARGE SCALE GENOMIC DNA]</scope>
    <source>
        <strain>ATCC 367 / BCRC 12310 / CIP 105137 / JCM 1170 / LMG 11437 / NCIMB 947 / NCTC 947</strain>
    </source>
</reference>